<sequence>MSAFFDLLKSQTASHPPIWLLRQVGRYMPPYQELKGSQSLKTFFHNTEAIVEATLLGPSLLHVDAAILFADILSILDGFAVTYDFAPGPRIQFSPEQPFTFTSDPQTIFSYLLDAIRTLKQKLPVPLIVFAASPFTLACYLIDGGASKDFSKTMSFLYVYPEKFDQLISTIIEGTAIYLKTQMDAGAAAVQLFESSSLRLPSALFTRYVTEPNRRLIAKLKEQAIPVSLFCRCFEENFYTLQATQADTLHPDYHVDLHRIQKNLMLSLQGNLDPAIFLLPQEKLLHYVEAFLVPLRTYPNFIFNSGHGILPETPLENVQLVVSYVQRQL</sequence>
<dbReference type="EC" id="4.1.1.37" evidence="1"/>
<dbReference type="EMBL" id="AE001363">
    <property type="protein sequence ID" value="AAD19028.1"/>
    <property type="molecule type" value="Genomic_DNA"/>
</dbReference>
<dbReference type="EMBL" id="AE002161">
    <property type="protein sequence ID" value="AAF38756.1"/>
    <property type="molecule type" value="Genomic_DNA"/>
</dbReference>
<dbReference type="EMBL" id="BA000008">
    <property type="protein sequence ID" value="BAA99098.1"/>
    <property type="molecule type" value="Genomic_DNA"/>
</dbReference>
<dbReference type="EMBL" id="AE009440">
    <property type="protein sequence ID" value="AAP98850.1"/>
    <property type="molecule type" value="Genomic_DNA"/>
</dbReference>
<dbReference type="PIR" id="F72023">
    <property type="entry name" value="F72023"/>
</dbReference>
<dbReference type="PIR" id="H86601">
    <property type="entry name" value="H86601"/>
</dbReference>
<dbReference type="RefSeq" id="NP_225085.1">
    <property type="nucleotide sequence ID" value="NC_000922.1"/>
</dbReference>
<dbReference type="RefSeq" id="WP_010883525.1">
    <property type="nucleotide sequence ID" value="NZ_LN847257.1"/>
</dbReference>
<dbReference type="SMR" id="Q9Z716"/>
<dbReference type="STRING" id="406984.CPK_ORF00301"/>
<dbReference type="GeneID" id="45050945"/>
<dbReference type="KEGG" id="cpa:CP_0976"/>
<dbReference type="KEGG" id="cpj:hemE"/>
<dbReference type="KEGG" id="cpn:CPn_0890"/>
<dbReference type="KEGG" id="cpt:CpB0921"/>
<dbReference type="PATRIC" id="fig|115713.3.peg.971"/>
<dbReference type="eggNOG" id="COG0407">
    <property type="taxonomic scope" value="Bacteria"/>
</dbReference>
<dbReference type="HOGENOM" id="CLU_040933_0_1_0"/>
<dbReference type="OrthoDB" id="9806656at2"/>
<dbReference type="UniPathway" id="UPA00251">
    <property type="reaction ID" value="UER00321"/>
</dbReference>
<dbReference type="Proteomes" id="UP000000583">
    <property type="component" value="Chromosome"/>
</dbReference>
<dbReference type="Proteomes" id="UP000000801">
    <property type="component" value="Chromosome"/>
</dbReference>
<dbReference type="GO" id="GO:0005829">
    <property type="term" value="C:cytosol"/>
    <property type="evidence" value="ECO:0007669"/>
    <property type="project" value="TreeGrafter"/>
</dbReference>
<dbReference type="GO" id="GO:0004853">
    <property type="term" value="F:uroporphyrinogen decarboxylase activity"/>
    <property type="evidence" value="ECO:0007669"/>
    <property type="project" value="UniProtKB-UniRule"/>
</dbReference>
<dbReference type="GO" id="GO:0006782">
    <property type="term" value="P:protoporphyrinogen IX biosynthetic process"/>
    <property type="evidence" value="ECO:0007669"/>
    <property type="project" value="UniProtKB-UniRule"/>
</dbReference>
<dbReference type="CDD" id="cd00717">
    <property type="entry name" value="URO-D"/>
    <property type="match status" value="1"/>
</dbReference>
<dbReference type="Gene3D" id="3.20.20.210">
    <property type="match status" value="1"/>
</dbReference>
<dbReference type="HAMAP" id="MF_00218">
    <property type="entry name" value="URO_D"/>
    <property type="match status" value="1"/>
</dbReference>
<dbReference type="InterPro" id="IPR038071">
    <property type="entry name" value="UROD/MetE-like_sf"/>
</dbReference>
<dbReference type="InterPro" id="IPR006361">
    <property type="entry name" value="Uroporphyrinogen_deCO2ase_HemE"/>
</dbReference>
<dbReference type="InterPro" id="IPR000257">
    <property type="entry name" value="Uroporphyrinogen_deCOase"/>
</dbReference>
<dbReference type="NCBIfam" id="TIGR01464">
    <property type="entry name" value="hemE"/>
    <property type="match status" value="1"/>
</dbReference>
<dbReference type="PANTHER" id="PTHR21091">
    <property type="entry name" value="METHYLTETRAHYDROFOLATE:HOMOCYSTEINE METHYLTRANSFERASE RELATED"/>
    <property type="match status" value="1"/>
</dbReference>
<dbReference type="PANTHER" id="PTHR21091:SF169">
    <property type="entry name" value="UROPORPHYRINOGEN DECARBOXYLASE"/>
    <property type="match status" value="1"/>
</dbReference>
<dbReference type="Pfam" id="PF01208">
    <property type="entry name" value="URO-D"/>
    <property type="match status" value="1"/>
</dbReference>
<dbReference type="SUPFAM" id="SSF51726">
    <property type="entry name" value="UROD/MetE-like"/>
    <property type="match status" value="1"/>
</dbReference>
<dbReference type="PROSITE" id="PS00906">
    <property type="entry name" value="UROD_1"/>
    <property type="match status" value="1"/>
</dbReference>
<dbReference type="PROSITE" id="PS00907">
    <property type="entry name" value="UROD_2"/>
    <property type="match status" value="1"/>
</dbReference>
<reference key="1">
    <citation type="journal article" date="1999" name="Nat. Genet.">
        <title>Comparative genomes of Chlamydia pneumoniae and C. trachomatis.</title>
        <authorList>
            <person name="Kalman S."/>
            <person name="Mitchell W.P."/>
            <person name="Marathe R."/>
            <person name="Lammel C.J."/>
            <person name="Fan J."/>
            <person name="Hyman R.W."/>
            <person name="Olinger L."/>
            <person name="Grimwood J."/>
            <person name="Davis R.W."/>
            <person name="Stephens R.S."/>
        </authorList>
    </citation>
    <scope>NUCLEOTIDE SEQUENCE [LARGE SCALE GENOMIC DNA]</scope>
    <source>
        <strain>CWL029</strain>
    </source>
</reference>
<reference key="2">
    <citation type="journal article" date="2000" name="Nucleic Acids Res.">
        <title>Genome sequences of Chlamydia trachomatis MoPn and Chlamydia pneumoniae AR39.</title>
        <authorList>
            <person name="Read T.D."/>
            <person name="Brunham R.C."/>
            <person name="Shen C."/>
            <person name="Gill S.R."/>
            <person name="Heidelberg J.F."/>
            <person name="White O."/>
            <person name="Hickey E.K."/>
            <person name="Peterson J.D."/>
            <person name="Utterback T.R."/>
            <person name="Berry K.J."/>
            <person name="Bass S."/>
            <person name="Linher K.D."/>
            <person name="Weidman J.F."/>
            <person name="Khouri H.M."/>
            <person name="Craven B."/>
            <person name="Bowman C."/>
            <person name="Dodson R.J."/>
            <person name="Gwinn M.L."/>
            <person name="Nelson W.C."/>
            <person name="DeBoy R.T."/>
            <person name="Kolonay J.F."/>
            <person name="McClarty G."/>
            <person name="Salzberg S.L."/>
            <person name="Eisen J.A."/>
            <person name="Fraser C.M."/>
        </authorList>
    </citation>
    <scope>NUCLEOTIDE SEQUENCE [LARGE SCALE GENOMIC DNA]</scope>
    <source>
        <strain>AR39</strain>
    </source>
</reference>
<reference key="3">
    <citation type="journal article" date="2000" name="Nucleic Acids Res.">
        <title>Comparison of whole genome sequences of Chlamydia pneumoniae J138 from Japan and CWL029 from USA.</title>
        <authorList>
            <person name="Shirai M."/>
            <person name="Hirakawa H."/>
            <person name="Kimoto M."/>
            <person name="Tabuchi M."/>
            <person name="Kishi F."/>
            <person name="Ouchi K."/>
            <person name="Shiba T."/>
            <person name="Ishii K."/>
            <person name="Hattori M."/>
            <person name="Kuhara S."/>
            <person name="Nakazawa T."/>
        </authorList>
    </citation>
    <scope>NUCLEOTIDE SEQUENCE [LARGE SCALE GENOMIC DNA]</scope>
    <source>
        <strain>J138</strain>
    </source>
</reference>
<reference key="4">
    <citation type="submission" date="2002-05" db="EMBL/GenBank/DDBJ databases">
        <title>The genome sequence of Chlamydia pneumoniae TW183 and comparison with other Chlamydia strains based on whole genome sequence analysis.</title>
        <authorList>
            <person name="Geng M.M."/>
            <person name="Schuhmacher A."/>
            <person name="Muehldorfer I."/>
            <person name="Bensch K.W."/>
            <person name="Schaefer K.P."/>
            <person name="Schneider S."/>
            <person name="Pohl T."/>
            <person name="Essig A."/>
            <person name="Marre R."/>
            <person name="Melchers K."/>
        </authorList>
    </citation>
    <scope>NUCLEOTIDE SEQUENCE [LARGE SCALE GENOMIC DNA]</scope>
    <source>
        <strain>TW-183</strain>
    </source>
</reference>
<evidence type="ECO:0000255" key="1">
    <source>
        <dbReference type="HAMAP-Rule" id="MF_00218"/>
    </source>
</evidence>
<organism>
    <name type="scientific">Chlamydia pneumoniae</name>
    <name type="common">Chlamydophila pneumoniae</name>
    <dbReference type="NCBI Taxonomy" id="83558"/>
    <lineage>
        <taxon>Bacteria</taxon>
        <taxon>Pseudomonadati</taxon>
        <taxon>Chlamydiota</taxon>
        <taxon>Chlamydiia</taxon>
        <taxon>Chlamydiales</taxon>
        <taxon>Chlamydiaceae</taxon>
        <taxon>Chlamydia/Chlamydophila group</taxon>
        <taxon>Chlamydia</taxon>
    </lineage>
</organism>
<feature type="chain" id="PRO_0000187595" description="Uroporphyrinogen decarboxylase">
    <location>
        <begin position="1"/>
        <end position="329"/>
    </location>
</feature>
<feature type="binding site" evidence="1">
    <location>
        <begin position="22"/>
        <end position="26"/>
    </location>
    <ligand>
        <name>substrate</name>
    </ligand>
</feature>
<feature type="binding site" evidence="1">
    <location>
        <position position="71"/>
    </location>
    <ligand>
        <name>substrate</name>
    </ligand>
</feature>
<feature type="binding site" evidence="1">
    <location>
        <position position="140"/>
    </location>
    <ligand>
        <name>substrate</name>
    </ligand>
</feature>
<feature type="binding site" evidence="1">
    <location>
        <position position="195"/>
    </location>
    <ligand>
        <name>substrate</name>
    </ligand>
</feature>
<feature type="binding site" evidence="1">
    <location>
        <position position="307"/>
    </location>
    <ligand>
        <name>substrate</name>
    </ligand>
</feature>
<feature type="site" description="Transition state stabilizer" evidence="1">
    <location>
        <position position="71"/>
    </location>
</feature>
<name>DCUP_CHLPN</name>
<protein>
    <recommendedName>
        <fullName evidence="1">Uroporphyrinogen decarboxylase</fullName>
        <shortName evidence="1">UPD</shortName>
        <shortName evidence="1">URO-D</shortName>
        <ecNumber evidence="1">4.1.1.37</ecNumber>
    </recommendedName>
</protein>
<gene>
    <name evidence="1" type="primary">hemE</name>
    <name type="ordered locus">CPn_0890</name>
    <name type="ordered locus">CP_0976</name>
    <name type="ordered locus">CpB0921</name>
</gene>
<proteinExistence type="inferred from homology"/>
<comment type="function">
    <text evidence="1">Catalyzes the decarboxylation of four acetate groups of uroporphyrinogen-III to yield coproporphyrinogen-III.</text>
</comment>
<comment type="catalytic activity">
    <reaction evidence="1">
        <text>uroporphyrinogen III + 4 H(+) = coproporphyrinogen III + 4 CO2</text>
        <dbReference type="Rhea" id="RHEA:19865"/>
        <dbReference type="ChEBI" id="CHEBI:15378"/>
        <dbReference type="ChEBI" id="CHEBI:16526"/>
        <dbReference type="ChEBI" id="CHEBI:57308"/>
        <dbReference type="ChEBI" id="CHEBI:57309"/>
        <dbReference type="EC" id="4.1.1.37"/>
    </reaction>
</comment>
<comment type="pathway">
    <text evidence="1">Porphyrin-containing compound metabolism; protoporphyrin-IX biosynthesis; coproporphyrinogen-III from 5-aminolevulinate: step 4/4.</text>
</comment>
<comment type="subunit">
    <text evidence="1">Homodimer.</text>
</comment>
<comment type="subcellular location">
    <subcellularLocation>
        <location evidence="1">Cytoplasm</location>
    </subcellularLocation>
</comment>
<comment type="similarity">
    <text evidence="1">Belongs to the uroporphyrinogen decarboxylase family.</text>
</comment>
<accession>Q9Z716</accession>
<accession>Q9JQ28</accession>
<keyword id="KW-0963">Cytoplasm</keyword>
<keyword id="KW-0210">Decarboxylase</keyword>
<keyword id="KW-0456">Lyase</keyword>
<keyword id="KW-0627">Porphyrin biosynthesis</keyword>